<accession>A4QKU4</accession>
<sequence length="320" mass="35375">MQTRNTFSWIREEITRSISVSLMIYIITWASISSAYPIFAQQNYENPREATGRIVCANCHLANKPVDIEVPQTVLPDTVFEAVVKIPYDMQLKQVLANGKKGALNVGAVLILPEGFELAPPDRISPEMKEKIGNLSFQNYRPNKKNILVIGPVPGQKYSEITFPILAPDPATNKDVHFLKYPIYVGGNRGRGQIYPDGSKSNNTVYNATAGGIISKILRKEKGGYEITIVDASNGREVIDIIPRGLELLVSEGESIKLDQPLTSNPNVGGFGQGDAEIVLQDPLRVQGLLFFLGSVVLAQIFLVLKKKQFEKVQLSEMNF</sequence>
<name>CYF_CRUWA</name>
<feature type="signal peptide" evidence="2">
    <location>
        <begin position="1"/>
        <end position="35"/>
    </location>
</feature>
<feature type="chain" id="PRO_0000342055" description="Cytochrome f">
    <location>
        <begin position="36"/>
        <end position="320"/>
    </location>
</feature>
<feature type="transmembrane region" description="Helical" evidence="2">
    <location>
        <begin position="286"/>
        <end position="306"/>
    </location>
</feature>
<feature type="binding site" description="axial binding residue" evidence="2">
    <location>
        <position position="36"/>
    </location>
    <ligand>
        <name>heme</name>
        <dbReference type="ChEBI" id="CHEBI:30413"/>
    </ligand>
    <ligandPart>
        <name>Fe</name>
        <dbReference type="ChEBI" id="CHEBI:18248"/>
    </ligandPart>
</feature>
<feature type="binding site" description="covalent" evidence="2">
    <location>
        <position position="56"/>
    </location>
    <ligand>
        <name>heme</name>
        <dbReference type="ChEBI" id="CHEBI:30413"/>
    </ligand>
</feature>
<feature type="binding site" description="covalent" evidence="2">
    <location>
        <position position="59"/>
    </location>
    <ligand>
        <name>heme</name>
        <dbReference type="ChEBI" id="CHEBI:30413"/>
    </ligand>
</feature>
<feature type="binding site" description="axial binding residue" evidence="2">
    <location>
        <position position="60"/>
    </location>
    <ligand>
        <name>heme</name>
        <dbReference type="ChEBI" id="CHEBI:30413"/>
    </ligand>
    <ligandPart>
        <name>Fe</name>
        <dbReference type="ChEBI" id="CHEBI:18248"/>
    </ligandPart>
</feature>
<organism>
    <name type="scientific">Crucihimalaya wallichii</name>
    <name type="common">Rock-cress</name>
    <name type="synonym">Arabidopsis campestris</name>
    <dbReference type="NCBI Taxonomy" id="78192"/>
    <lineage>
        <taxon>Eukaryota</taxon>
        <taxon>Viridiplantae</taxon>
        <taxon>Streptophyta</taxon>
        <taxon>Embryophyta</taxon>
        <taxon>Tracheophyta</taxon>
        <taxon>Spermatophyta</taxon>
        <taxon>Magnoliopsida</taxon>
        <taxon>eudicotyledons</taxon>
        <taxon>Gunneridae</taxon>
        <taxon>Pentapetalae</taxon>
        <taxon>rosids</taxon>
        <taxon>malvids</taxon>
        <taxon>Brassicales</taxon>
        <taxon>Brassicaceae</taxon>
        <taxon>Crucihimalayeae</taxon>
        <taxon>Crucihimalaya</taxon>
    </lineage>
</organism>
<comment type="function">
    <text evidence="2">Component of the cytochrome b6-f complex, which mediates electron transfer between photosystem II (PSII) and photosystem I (PSI), cyclic electron flow around PSI, and state transitions.</text>
</comment>
<comment type="cofactor">
    <cofactor evidence="2">
        <name>heme</name>
        <dbReference type="ChEBI" id="CHEBI:30413"/>
    </cofactor>
    <text evidence="2">Binds 1 heme group covalently.</text>
</comment>
<comment type="subunit">
    <text evidence="1">The 4 large subunits of the cytochrome b6-f complex are cytochrome b6, subunit IV (17 kDa polypeptide, petD), cytochrome f and the Rieske protein, while the 4 small subunits are PetG, PetL, PetM and PetN. The complex functions as a dimer (By similarity).</text>
</comment>
<comment type="subcellular location">
    <subcellularLocation>
        <location evidence="2">Plastid</location>
        <location evidence="2">Chloroplast thylakoid membrane</location>
        <topology evidence="2">Single-pass membrane protein</topology>
    </subcellularLocation>
</comment>
<comment type="similarity">
    <text evidence="2">Belongs to the cytochrome f family.</text>
</comment>
<gene>
    <name evidence="2" type="primary">petA</name>
</gene>
<dbReference type="EMBL" id="AP009372">
    <property type="protein sequence ID" value="BAF50299.1"/>
    <property type="molecule type" value="Genomic_DNA"/>
</dbReference>
<dbReference type="RefSeq" id="YP_001123475.1">
    <property type="nucleotide sequence ID" value="NC_009271.1"/>
</dbReference>
<dbReference type="SMR" id="A4QKU4"/>
<dbReference type="GeneID" id="4962691"/>
<dbReference type="GO" id="GO:0009535">
    <property type="term" value="C:chloroplast thylakoid membrane"/>
    <property type="evidence" value="ECO:0007669"/>
    <property type="project" value="UniProtKB-SubCell"/>
</dbReference>
<dbReference type="GO" id="GO:0009055">
    <property type="term" value="F:electron transfer activity"/>
    <property type="evidence" value="ECO:0007669"/>
    <property type="project" value="UniProtKB-UniRule"/>
</dbReference>
<dbReference type="GO" id="GO:0020037">
    <property type="term" value="F:heme binding"/>
    <property type="evidence" value="ECO:0007669"/>
    <property type="project" value="InterPro"/>
</dbReference>
<dbReference type="GO" id="GO:0005506">
    <property type="term" value="F:iron ion binding"/>
    <property type="evidence" value="ECO:0007669"/>
    <property type="project" value="InterPro"/>
</dbReference>
<dbReference type="GO" id="GO:0015979">
    <property type="term" value="P:photosynthesis"/>
    <property type="evidence" value="ECO:0007669"/>
    <property type="project" value="UniProtKB-UniRule"/>
</dbReference>
<dbReference type="FunFam" id="1.20.5.700:FF:000001">
    <property type="entry name" value="Cytochrome f"/>
    <property type="match status" value="1"/>
</dbReference>
<dbReference type="FunFam" id="2.40.50.100:FF:000007">
    <property type="entry name" value="Cytochrome f"/>
    <property type="match status" value="1"/>
</dbReference>
<dbReference type="FunFam" id="2.60.40.830:FF:000001">
    <property type="entry name" value="Cytochrome f"/>
    <property type="match status" value="1"/>
</dbReference>
<dbReference type="Gene3D" id="2.40.50.100">
    <property type="match status" value="1"/>
</dbReference>
<dbReference type="Gene3D" id="2.60.40.830">
    <property type="entry name" value="Cytochrome f large domain"/>
    <property type="match status" value="1"/>
</dbReference>
<dbReference type="Gene3D" id="1.20.5.700">
    <property type="entry name" value="Single helix bin"/>
    <property type="match status" value="1"/>
</dbReference>
<dbReference type="HAMAP" id="MF_00610">
    <property type="entry name" value="Cytb6_f_cytF"/>
    <property type="match status" value="1"/>
</dbReference>
<dbReference type="InterPro" id="IPR024058">
    <property type="entry name" value="Cyt-f_TM"/>
</dbReference>
<dbReference type="InterPro" id="IPR002325">
    <property type="entry name" value="Cyt_f"/>
</dbReference>
<dbReference type="InterPro" id="IPR024094">
    <property type="entry name" value="Cyt_f_lg_dom"/>
</dbReference>
<dbReference type="InterPro" id="IPR036826">
    <property type="entry name" value="Cyt_f_lg_dom_sf"/>
</dbReference>
<dbReference type="InterPro" id="IPR011054">
    <property type="entry name" value="Rudment_hybrid_motif"/>
</dbReference>
<dbReference type="PANTHER" id="PTHR33288">
    <property type="match status" value="1"/>
</dbReference>
<dbReference type="PANTHER" id="PTHR33288:SF10">
    <property type="entry name" value="CYTOCHROME F"/>
    <property type="match status" value="1"/>
</dbReference>
<dbReference type="Pfam" id="PF01333">
    <property type="entry name" value="Apocytochr_F_C"/>
    <property type="match status" value="1"/>
</dbReference>
<dbReference type="Pfam" id="PF16639">
    <property type="entry name" value="Apocytochr_F_N"/>
    <property type="match status" value="1"/>
</dbReference>
<dbReference type="PRINTS" id="PR00610">
    <property type="entry name" value="CYTOCHROMEF"/>
</dbReference>
<dbReference type="SUPFAM" id="SSF103431">
    <property type="entry name" value="Cytochrome f subunit of the cytochrome b6f complex, transmembrane anchor"/>
    <property type="match status" value="1"/>
</dbReference>
<dbReference type="SUPFAM" id="SSF49441">
    <property type="entry name" value="Cytochrome f, large domain"/>
    <property type="match status" value="1"/>
</dbReference>
<dbReference type="SUPFAM" id="SSF51246">
    <property type="entry name" value="Rudiment single hybrid motif"/>
    <property type="match status" value="1"/>
</dbReference>
<dbReference type="PROSITE" id="PS51010">
    <property type="entry name" value="CYTF"/>
    <property type="match status" value="1"/>
</dbReference>
<evidence type="ECO:0000250" key="1"/>
<evidence type="ECO:0000255" key="2">
    <source>
        <dbReference type="HAMAP-Rule" id="MF_00610"/>
    </source>
</evidence>
<reference key="1">
    <citation type="submission" date="2007-03" db="EMBL/GenBank/DDBJ databases">
        <title>Sequencing analysis of Crucihimalaya wallichii chloroplast DNA.</title>
        <authorList>
            <person name="Hosouchi T."/>
            <person name="Tsuruoka H."/>
            <person name="Kotani H."/>
        </authorList>
    </citation>
    <scope>NUCLEOTIDE SEQUENCE [LARGE SCALE GENOMIC DNA]</scope>
</reference>
<protein>
    <recommendedName>
        <fullName evidence="2">Cytochrome f</fullName>
    </recommendedName>
</protein>
<keyword id="KW-0150">Chloroplast</keyword>
<keyword id="KW-0249">Electron transport</keyword>
<keyword id="KW-0349">Heme</keyword>
<keyword id="KW-0408">Iron</keyword>
<keyword id="KW-0472">Membrane</keyword>
<keyword id="KW-0479">Metal-binding</keyword>
<keyword id="KW-0602">Photosynthesis</keyword>
<keyword id="KW-0934">Plastid</keyword>
<keyword id="KW-0732">Signal</keyword>
<keyword id="KW-0793">Thylakoid</keyword>
<keyword id="KW-0812">Transmembrane</keyword>
<keyword id="KW-1133">Transmembrane helix</keyword>
<keyword id="KW-0813">Transport</keyword>
<proteinExistence type="inferred from homology"/>
<geneLocation type="chloroplast"/>